<keyword id="KW-0002">3D-structure</keyword>
<keyword id="KW-0456">Lyase</keyword>
<keyword id="KW-0663">Pyridoxal phosphate</keyword>
<keyword id="KW-1185">Reference proteome</keyword>
<gene>
    <name type="ORF">SPAC23A1.14c</name>
</gene>
<reference key="1">
    <citation type="journal article" date="2002" name="Nature">
        <title>The genome sequence of Schizosaccharomyces pombe.</title>
        <authorList>
            <person name="Wood V."/>
            <person name="Gwilliam R."/>
            <person name="Rajandream M.A."/>
            <person name="Lyne M.H."/>
            <person name="Lyne R."/>
            <person name="Stewart A."/>
            <person name="Sgouros J.G."/>
            <person name="Peat N."/>
            <person name="Hayles J."/>
            <person name="Baker S.G."/>
            <person name="Basham D."/>
            <person name="Bowman S."/>
            <person name="Brooks K."/>
            <person name="Brown D."/>
            <person name="Brown S."/>
            <person name="Chillingworth T."/>
            <person name="Churcher C.M."/>
            <person name="Collins M."/>
            <person name="Connor R."/>
            <person name="Cronin A."/>
            <person name="Davis P."/>
            <person name="Feltwell T."/>
            <person name="Fraser A."/>
            <person name="Gentles S."/>
            <person name="Goble A."/>
            <person name="Hamlin N."/>
            <person name="Harris D.E."/>
            <person name="Hidalgo J."/>
            <person name="Hodgson G."/>
            <person name="Holroyd S."/>
            <person name="Hornsby T."/>
            <person name="Howarth S."/>
            <person name="Huckle E.J."/>
            <person name="Hunt S."/>
            <person name="Jagels K."/>
            <person name="James K.D."/>
            <person name="Jones L."/>
            <person name="Jones M."/>
            <person name="Leather S."/>
            <person name="McDonald S."/>
            <person name="McLean J."/>
            <person name="Mooney P."/>
            <person name="Moule S."/>
            <person name="Mungall K.L."/>
            <person name="Murphy L.D."/>
            <person name="Niblett D."/>
            <person name="Odell C."/>
            <person name="Oliver K."/>
            <person name="O'Neil S."/>
            <person name="Pearson D."/>
            <person name="Quail M.A."/>
            <person name="Rabbinowitsch E."/>
            <person name="Rutherford K.M."/>
            <person name="Rutter S."/>
            <person name="Saunders D."/>
            <person name="Seeger K."/>
            <person name="Sharp S."/>
            <person name="Skelton J."/>
            <person name="Simmonds M.N."/>
            <person name="Squares R."/>
            <person name="Squares S."/>
            <person name="Stevens K."/>
            <person name="Taylor K."/>
            <person name="Taylor R.G."/>
            <person name="Tivey A."/>
            <person name="Walsh S.V."/>
            <person name="Warren T."/>
            <person name="Whitehead S."/>
            <person name="Woodward J.R."/>
            <person name="Volckaert G."/>
            <person name="Aert R."/>
            <person name="Robben J."/>
            <person name="Grymonprez B."/>
            <person name="Weltjens I."/>
            <person name="Vanstreels E."/>
            <person name="Rieger M."/>
            <person name="Schaefer M."/>
            <person name="Mueller-Auer S."/>
            <person name="Gabel C."/>
            <person name="Fuchs M."/>
            <person name="Duesterhoeft A."/>
            <person name="Fritzc C."/>
            <person name="Holzer E."/>
            <person name="Moestl D."/>
            <person name="Hilbert H."/>
            <person name="Borzym K."/>
            <person name="Langer I."/>
            <person name="Beck A."/>
            <person name="Lehrach H."/>
            <person name="Reinhardt R."/>
            <person name="Pohl T.M."/>
            <person name="Eger P."/>
            <person name="Zimmermann W."/>
            <person name="Wedler H."/>
            <person name="Wambutt R."/>
            <person name="Purnelle B."/>
            <person name="Goffeau A."/>
            <person name="Cadieu E."/>
            <person name="Dreano S."/>
            <person name="Gloux S."/>
            <person name="Lelaure V."/>
            <person name="Mottier S."/>
            <person name="Galibert F."/>
            <person name="Aves S.J."/>
            <person name="Xiang Z."/>
            <person name="Hunt C."/>
            <person name="Moore K."/>
            <person name="Hurst S.M."/>
            <person name="Lucas M."/>
            <person name="Rochet M."/>
            <person name="Gaillardin C."/>
            <person name="Tallada V.A."/>
            <person name="Garzon A."/>
            <person name="Thode G."/>
            <person name="Daga R.R."/>
            <person name="Cruzado L."/>
            <person name="Jimenez J."/>
            <person name="Sanchez M."/>
            <person name="del Rey F."/>
            <person name="Benito J."/>
            <person name="Dominguez A."/>
            <person name="Revuelta J.L."/>
            <person name="Moreno S."/>
            <person name="Armstrong J."/>
            <person name="Forsburg S.L."/>
            <person name="Cerutti L."/>
            <person name="Lowe T."/>
            <person name="McCombie W.R."/>
            <person name="Paulsen I."/>
            <person name="Potashkin J."/>
            <person name="Shpakovski G.V."/>
            <person name="Ussery D."/>
            <person name="Barrell B.G."/>
            <person name="Nurse P."/>
        </authorList>
    </citation>
    <scope>NUCLEOTIDE SEQUENCE [LARGE SCALE GENOMIC DNA]</scope>
    <source>
        <strain>972 / ATCC 24843</strain>
    </source>
</reference>
<reference key="2">
    <citation type="journal article" date="1997" name="DNA Res.">
        <title>Identification of open reading frames in Schizosaccharomyces pombe cDNAs.</title>
        <authorList>
            <person name="Yoshioka S."/>
            <person name="Kato K."/>
            <person name="Nakai K."/>
            <person name="Okayama H."/>
            <person name="Nojima H."/>
        </authorList>
    </citation>
    <scope>NUCLEOTIDE SEQUENCE [LARGE SCALE MRNA] OF 141-286</scope>
    <source>
        <strain>PR745</strain>
    </source>
</reference>
<sequence length="398" mass="43284">MTHTPSFDLSDIKSTLSTNVLHADDAYALENDVAPPIHISTTYTYPGTPDTLQPFTKLAEEDFPYYARISGNNVDRAEASLSSVLGAPSVVYSSGLAAIYGLLSYLNPKHIAVHKPGFGGYSGTIQIIARINRLTGLETSFIDGKCDAIGEGDVIWLETPLNPLGIAFDIPFYKELAKKKGAILVVDSTFAPPPIQDALVLGADYVVHSATKYLAGHSDVLAGVTASKDRSKILDLKADRAYLGTILHPQQAFLLLRSLRTFPLRIAKHSENGFLVAQHLNKLATDEQFATSLGIDSSLILEVYHNSLQTKEFVAKNLTGGHASCFSVLLKSDTVAKHLCCELKYFHHATSLGSVESLIEWRRMTDSKIDPRLVRLSIGIEDAADLIADLNRVFASLS</sequence>
<accession>O42851</accession>
<accession>P78886</accession>
<name>YFHE_SCHPO</name>
<dbReference type="EMBL" id="CU329670">
    <property type="protein sequence ID" value="CAA16988.1"/>
    <property type="molecule type" value="Genomic_DNA"/>
</dbReference>
<dbReference type="EMBL" id="D89237">
    <property type="protein sequence ID" value="BAA13898.1"/>
    <property type="molecule type" value="mRNA"/>
</dbReference>
<dbReference type="PIR" id="T38233">
    <property type="entry name" value="T38233"/>
</dbReference>
<dbReference type="PIR" id="T43142">
    <property type="entry name" value="T43142"/>
</dbReference>
<dbReference type="RefSeq" id="NP_594443.1">
    <property type="nucleotide sequence ID" value="NM_001019872.2"/>
</dbReference>
<dbReference type="PDB" id="7YEO">
    <property type="method" value="X-ray"/>
    <property type="resolution" value="1.70 A"/>
    <property type="chains" value="A/B=1-398"/>
</dbReference>
<dbReference type="PDBsum" id="7YEO"/>
<dbReference type="SMR" id="O42851"/>
<dbReference type="BioGRID" id="278523">
    <property type="interactions" value="16"/>
</dbReference>
<dbReference type="FunCoup" id="O42851">
    <property type="interactions" value="447"/>
</dbReference>
<dbReference type="IntAct" id="O42851">
    <property type="interactions" value="1"/>
</dbReference>
<dbReference type="STRING" id="284812.O42851"/>
<dbReference type="iPTMnet" id="O42851"/>
<dbReference type="PaxDb" id="4896-SPAC23A1.14c.1"/>
<dbReference type="EnsemblFungi" id="SPAC23A1.14c.1">
    <property type="protein sequence ID" value="SPAC23A1.14c.1:pep"/>
    <property type="gene ID" value="SPAC23A1.14c"/>
</dbReference>
<dbReference type="KEGG" id="spo:2542042"/>
<dbReference type="PomBase" id="SPAC23A1.14c"/>
<dbReference type="VEuPathDB" id="FungiDB:SPAC23A1.14c"/>
<dbReference type="eggNOG" id="KOG0053">
    <property type="taxonomic scope" value="Eukaryota"/>
</dbReference>
<dbReference type="HOGENOM" id="CLU_018986_3_0_1"/>
<dbReference type="InParanoid" id="O42851"/>
<dbReference type="OMA" id="HKKMHGV"/>
<dbReference type="PhylomeDB" id="O42851"/>
<dbReference type="Reactome" id="R-SPO-1614558">
    <property type="pathway name" value="Degradation of cysteine and homocysteine"/>
</dbReference>
<dbReference type="Reactome" id="R-SPO-1614603">
    <property type="pathway name" value="Cysteine formation from homocysteine"/>
</dbReference>
<dbReference type="PRO" id="PR:O42851"/>
<dbReference type="Proteomes" id="UP000002485">
    <property type="component" value="Chromosome I"/>
</dbReference>
<dbReference type="GO" id="GO:0005737">
    <property type="term" value="C:cytoplasm"/>
    <property type="evidence" value="ECO:0000318"/>
    <property type="project" value="GO_Central"/>
</dbReference>
<dbReference type="GO" id="GO:0016846">
    <property type="term" value="F:carbon-sulfur lyase activity"/>
    <property type="evidence" value="ECO:0000318"/>
    <property type="project" value="GO_Central"/>
</dbReference>
<dbReference type="GO" id="GO:0030170">
    <property type="term" value="F:pyridoxal phosphate binding"/>
    <property type="evidence" value="ECO:0000318"/>
    <property type="project" value="GO_Central"/>
</dbReference>
<dbReference type="GO" id="GO:0019346">
    <property type="term" value="P:transsulfuration"/>
    <property type="evidence" value="ECO:0000318"/>
    <property type="project" value="GO_Central"/>
</dbReference>
<dbReference type="Gene3D" id="3.90.1150.10">
    <property type="entry name" value="Aspartate Aminotransferase, domain 1"/>
    <property type="match status" value="1"/>
</dbReference>
<dbReference type="Gene3D" id="3.40.640.10">
    <property type="entry name" value="Type I PLP-dependent aspartate aminotransferase-like (Major domain)"/>
    <property type="match status" value="1"/>
</dbReference>
<dbReference type="InterPro" id="IPR000277">
    <property type="entry name" value="Cys/Met-Metab_PyrdxlP-dep_enz"/>
</dbReference>
<dbReference type="InterPro" id="IPR054542">
    <property type="entry name" value="Cys_met_metab_PP"/>
</dbReference>
<dbReference type="InterPro" id="IPR015424">
    <property type="entry name" value="PyrdxlP-dep_Trfase"/>
</dbReference>
<dbReference type="InterPro" id="IPR015421">
    <property type="entry name" value="PyrdxlP-dep_Trfase_major"/>
</dbReference>
<dbReference type="InterPro" id="IPR015422">
    <property type="entry name" value="PyrdxlP-dep_Trfase_small"/>
</dbReference>
<dbReference type="PANTHER" id="PTHR11808:SF35">
    <property type="entry name" value="CYSTATHIONINE GAMMA-SYNTHASE (AFU_ORTHOLOGUE AFUA_7G01590)"/>
    <property type="match status" value="1"/>
</dbReference>
<dbReference type="PANTHER" id="PTHR11808">
    <property type="entry name" value="TRANS-SULFURATION ENZYME FAMILY MEMBER"/>
    <property type="match status" value="1"/>
</dbReference>
<dbReference type="Pfam" id="PF01053">
    <property type="entry name" value="Cys_Met_Meta_PP"/>
    <property type="match status" value="1"/>
</dbReference>
<dbReference type="PIRSF" id="PIRSF001434">
    <property type="entry name" value="CGS"/>
    <property type="match status" value="1"/>
</dbReference>
<dbReference type="SUPFAM" id="SSF53383">
    <property type="entry name" value="PLP-dependent transferases"/>
    <property type="match status" value="1"/>
</dbReference>
<dbReference type="PROSITE" id="PS00868">
    <property type="entry name" value="CYS_MET_METAB_PP"/>
    <property type="match status" value="1"/>
</dbReference>
<evidence type="ECO:0000250" key="1"/>
<evidence type="ECO:0000305" key="2"/>
<evidence type="ECO:0007829" key="3">
    <source>
        <dbReference type="PDB" id="7YEO"/>
    </source>
</evidence>
<feature type="chain" id="PRO_0000114765" description="Uncharacterized trans-sulfuration enzyme C23A1.14c">
    <location>
        <begin position="1"/>
        <end position="398"/>
    </location>
</feature>
<feature type="modified residue" description="N6-(pyridoxal phosphate)lysine" evidence="1">
    <location>
        <position position="212"/>
    </location>
</feature>
<feature type="sequence conflict" description="In Ref. 2; BAA13898." evidence="2" ref="2">
    <original>K</original>
    <variation>E</variation>
    <location>
        <position position="268"/>
    </location>
</feature>
<feature type="sequence conflict" description="In Ref. 2; BAA13898." evidence="2" ref="2">
    <original>Q</original>
    <variation>L</variation>
    <location>
        <position position="278"/>
    </location>
</feature>
<feature type="helix" evidence="3">
    <location>
        <begin position="16"/>
        <end position="22"/>
    </location>
</feature>
<feature type="helix" evidence="3">
    <location>
        <begin position="25"/>
        <end position="27"/>
    </location>
</feature>
<feature type="turn" evidence="3">
    <location>
        <begin position="49"/>
        <end position="51"/>
    </location>
</feature>
<feature type="turn" evidence="3">
    <location>
        <begin position="67"/>
        <end position="69"/>
    </location>
</feature>
<feature type="helix" evidence="3">
    <location>
        <begin position="72"/>
        <end position="85"/>
    </location>
</feature>
<feature type="strand" evidence="3">
    <location>
        <begin position="89"/>
        <end position="94"/>
    </location>
</feature>
<feature type="helix" evidence="3">
    <location>
        <begin position="95"/>
        <end position="106"/>
    </location>
</feature>
<feature type="strand" evidence="3">
    <location>
        <begin position="109"/>
        <end position="113"/>
    </location>
</feature>
<feature type="turn" evidence="3">
    <location>
        <begin position="116"/>
        <end position="118"/>
    </location>
</feature>
<feature type="helix" evidence="3">
    <location>
        <begin position="122"/>
        <end position="135"/>
    </location>
</feature>
<feature type="strand" evidence="3">
    <location>
        <begin position="138"/>
        <end position="141"/>
    </location>
</feature>
<feature type="strand" evidence="3">
    <location>
        <begin position="143"/>
        <end position="145"/>
    </location>
</feature>
<feature type="strand" evidence="3">
    <location>
        <begin position="154"/>
        <end position="160"/>
    </location>
</feature>
<feature type="turn" evidence="3">
    <location>
        <begin position="162"/>
        <end position="164"/>
    </location>
</feature>
<feature type="helix" evidence="3">
    <location>
        <begin position="170"/>
        <end position="180"/>
    </location>
</feature>
<feature type="strand" evidence="3">
    <location>
        <begin position="183"/>
        <end position="187"/>
    </location>
</feature>
<feature type="turn" evidence="3">
    <location>
        <begin position="193"/>
        <end position="195"/>
    </location>
</feature>
<feature type="turn" evidence="3">
    <location>
        <begin position="198"/>
        <end position="202"/>
    </location>
</feature>
<feature type="strand" evidence="3">
    <location>
        <begin position="204"/>
        <end position="209"/>
    </location>
</feature>
<feature type="turn" evidence="3">
    <location>
        <begin position="210"/>
        <end position="215"/>
    </location>
</feature>
<feature type="strand" evidence="3">
    <location>
        <begin position="223"/>
        <end position="226"/>
    </location>
</feature>
<feature type="helix" evidence="3">
    <location>
        <begin position="230"/>
        <end position="243"/>
    </location>
</feature>
<feature type="helix" evidence="3">
    <location>
        <begin position="249"/>
        <end position="285"/>
    </location>
</feature>
<feature type="helix" evidence="3">
    <location>
        <begin position="287"/>
        <end position="292"/>
    </location>
</feature>
<feature type="helix" evidence="3">
    <location>
        <begin position="297"/>
        <end position="299"/>
    </location>
</feature>
<feature type="strand" evidence="3">
    <location>
        <begin position="300"/>
        <end position="303"/>
    </location>
</feature>
<feature type="helix" evidence="3">
    <location>
        <begin position="306"/>
        <end position="308"/>
    </location>
</feature>
<feature type="helix" evidence="3">
    <location>
        <begin position="313"/>
        <end position="317"/>
    </location>
</feature>
<feature type="strand" evidence="3">
    <location>
        <begin position="324"/>
        <end position="331"/>
    </location>
</feature>
<feature type="helix" evidence="3">
    <location>
        <begin position="333"/>
        <end position="342"/>
    </location>
</feature>
<feature type="strand" evidence="3">
    <location>
        <begin position="344"/>
        <end position="348"/>
    </location>
</feature>
<feature type="strand" evidence="3">
    <location>
        <begin position="355"/>
        <end position="361"/>
    </location>
</feature>
<feature type="helix" evidence="3">
    <location>
        <begin position="362"/>
        <end position="364"/>
    </location>
</feature>
<feature type="strand" evidence="3">
    <location>
        <begin position="373"/>
        <end position="377"/>
    </location>
</feature>
<feature type="helix" evidence="3">
    <location>
        <begin position="383"/>
        <end position="396"/>
    </location>
</feature>
<comment type="cofactor">
    <cofactor evidence="1">
        <name>pyridoxal 5'-phosphate</name>
        <dbReference type="ChEBI" id="CHEBI:597326"/>
    </cofactor>
</comment>
<comment type="similarity">
    <text evidence="2">Belongs to the trans-sulfuration enzymes family.</text>
</comment>
<proteinExistence type="evidence at protein level"/>
<protein>
    <recommendedName>
        <fullName>Uncharacterized trans-sulfuration enzyme C23A1.14c</fullName>
    </recommendedName>
</protein>
<organism>
    <name type="scientific">Schizosaccharomyces pombe (strain 972 / ATCC 24843)</name>
    <name type="common">Fission yeast</name>
    <dbReference type="NCBI Taxonomy" id="284812"/>
    <lineage>
        <taxon>Eukaryota</taxon>
        <taxon>Fungi</taxon>
        <taxon>Dikarya</taxon>
        <taxon>Ascomycota</taxon>
        <taxon>Taphrinomycotina</taxon>
        <taxon>Schizosaccharomycetes</taxon>
        <taxon>Schizosaccharomycetales</taxon>
        <taxon>Schizosaccharomycetaceae</taxon>
        <taxon>Schizosaccharomyces</taxon>
    </lineage>
</organism>